<dbReference type="EMBL" id="CR760043">
    <property type="protein sequence ID" value="CAJ82435.1"/>
    <property type="molecule type" value="mRNA"/>
</dbReference>
<dbReference type="EMBL" id="BC121522">
    <property type="protein sequence ID" value="AAI21523.1"/>
    <property type="molecule type" value="mRNA"/>
</dbReference>
<dbReference type="RefSeq" id="NP_001016728.1">
    <property type="nucleotide sequence ID" value="NM_001016728.2"/>
</dbReference>
<dbReference type="FunCoup" id="Q28J59">
    <property type="interactions" value="53"/>
</dbReference>
<dbReference type="GeneID" id="549482"/>
<dbReference type="KEGG" id="xtr:549482"/>
<dbReference type="AGR" id="Xenbase:XB-GENE-1000335"/>
<dbReference type="CTD" id="340277"/>
<dbReference type="Xenbase" id="XB-GENE-1000335">
    <property type="gene designation" value="fam221a"/>
</dbReference>
<dbReference type="InParanoid" id="Q28J59"/>
<dbReference type="OrthoDB" id="310364at2759"/>
<dbReference type="Proteomes" id="UP000008143">
    <property type="component" value="Chromosome 6"/>
</dbReference>
<dbReference type="Bgee" id="ENSXETG00000017961">
    <property type="expression patterns" value="Expressed in testis and 14 other cell types or tissues"/>
</dbReference>
<dbReference type="InterPro" id="IPR026755">
    <property type="entry name" value="Fam221a/b"/>
</dbReference>
<dbReference type="PANTHER" id="PTHR31214:SF2">
    <property type="entry name" value="PROTEIN FAM221A"/>
    <property type="match status" value="1"/>
</dbReference>
<dbReference type="PANTHER" id="PTHR31214">
    <property type="entry name" value="PROTEIN FAM221A-RELATED"/>
    <property type="match status" value="1"/>
</dbReference>
<dbReference type="Pfam" id="PF14753">
    <property type="entry name" value="FAM221"/>
    <property type="match status" value="1"/>
</dbReference>
<gene>
    <name type="primary">fam221a</name>
    <name type="ORF">TNeu087m24.1</name>
</gene>
<keyword id="KW-1185">Reference proteome</keyword>
<sequence>MEKLQFQGGARAIDEYAEYRRIVGDDDGGKLFTPEEYEEYKKTVLPMRLQNRLYVSWRSPTGMDCKLVGPETPCFCTHRYKQHKTDFQELPKERPLLLPCRVSKCACKSFHYIPLNGSRPIRCRCKHFADEHSVAGTYHCTQCTKCSGFHSSFTCGCSQPAYTHDTVVETKEERLAQGKPVGHDVPFAAMGGLTGFSSLAEGYMRLDESGAGAPSTSFLESSESGTSHPFLKMYYQPIKVQAVSEPSGIVTQVSNMRISEDDDMAYFERRYQERLLKEKEQKRQKNSKPPTTNRP</sequence>
<reference key="1">
    <citation type="submission" date="2006-10" db="EMBL/GenBank/DDBJ databases">
        <authorList>
            <consortium name="Sanger Xenopus tropicalis EST/cDNA project"/>
        </authorList>
    </citation>
    <scope>NUCLEOTIDE SEQUENCE [LARGE SCALE MRNA]</scope>
    <source>
        <tissue>Neurula</tissue>
    </source>
</reference>
<reference key="2">
    <citation type="submission" date="2006-08" db="EMBL/GenBank/DDBJ databases">
        <authorList>
            <consortium name="NIH - Xenopus Gene Collection (XGC) project"/>
        </authorList>
    </citation>
    <scope>NUCLEOTIDE SEQUENCE [LARGE SCALE MRNA] OF 2-295</scope>
    <source>
        <strain>N6</strain>
        <tissue>Liver</tissue>
    </source>
</reference>
<evidence type="ECO:0000256" key="1">
    <source>
        <dbReference type="SAM" id="MobiDB-lite"/>
    </source>
</evidence>
<evidence type="ECO:0000305" key="2"/>
<proteinExistence type="evidence at transcript level"/>
<organism>
    <name type="scientific">Xenopus tropicalis</name>
    <name type="common">Western clawed frog</name>
    <name type="synonym">Silurana tropicalis</name>
    <dbReference type="NCBI Taxonomy" id="8364"/>
    <lineage>
        <taxon>Eukaryota</taxon>
        <taxon>Metazoa</taxon>
        <taxon>Chordata</taxon>
        <taxon>Craniata</taxon>
        <taxon>Vertebrata</taxon>
        <taxon>Euteleostomi</taxon>
        <taxon>Amphibia</taxon>
        <taxon>Batrachia</taxon>
        <taxon>Anura</taxon>
        <taxon>Pipoidea</taxon>
        <taxon>Pipidae</taxon>
        <taxon>Xenopodinae</taxon>
        <taxon>Xenopus</taxon>
        <taxon>Silurana</taxon>
    </lineage>
</organism>
<feature type="chain" id="PRO_0000295143" description="Protein FAM221A">
    <location>
        <begin position="1"/>
        <end position="295"/>
    </location>
</feature>
<feature type="region of interest" description="Disordered" evidence="1">
    <location>
        <begin position="272"/>
        <end position="295"/>
    </location>
</feature>
<feature type="compositionally biased region" description="Basic and acidic residues" evidence="1">
    <location>
        <begin position="272"/>
        <end position="283"/>
    </location>
</feature>
<feature type="sequence conflict" description="In Ref. 2; AAI21523." evidence="2" ref="2">
    <original>A</original>
    <variation>T</variation>
    <location>
        <position position="211"/>
    </location>
</feature>
<accession>Q28J59</accession>
<accession>Q0IIX0</accession>
<name>F221A_XENTR</name>
<protein>
    <recommendedName>
        <fullName>Protein FAM221A</fullName>
    </recommendedName>
</protein>
<comment type="similarity">
    <text evidence="2">Belongs to the FAM221 family.</text>
</comment>